<accession>Q8BWQ4</accession>
<accession>Q3TYT6</accession>
<accession>Q8R3E7</accession>
<comment type="function">
    <text evidence="1">S-adenosyl-L-methionine-dependent methyltransferase that mediates mRNA cap2 2'-O-ribose methylation to the 5'-cap structure of mRNAs. Methylates the ribose of the second nucleotide of a m(7)GpppG-capped mRNA and small nuclear RNA (snRNA) (cap0) to produce m(7)GpppRmpNm (cap2). Recognizes a guanosine cap on RNA independently of its N(7) methylation status. Display cap2 methylation on both cap0 and cap1. Displays a preference for cap1 RNAs.</text>
</comment>
<comment type="catalytic activity">
    <reaction evidence="1">
        <text>a 5'-end (N(7)-methyl 5'-triphosphoguanosine)-(2'-O-methyl-ribonucleoside)-(ribonucleotide) in mRNA + S-adenosyl-L-methionine = a 5'-end (N(7)-methyl 5'-triphosphoguanosine)-(2'-O-methyl-ribonucleoside)-(2'-O-methyl-ribonucleotide) in mRNA + S-adenosyl-L-homocysteine + H(+)</text>
        <dbReference type="Rhea" id="RHEA:67024"/>
        <dbReference type="Rhea" id="RHEA-COMP:17169"/>
        <dbReference type="Rhea" id="RHEA-COMP:17170"/>
        <dbReference type="ChEBI" id="CHEBI:15378"/>
        <dbReference type="ChEBI" id="CHEBI:57856"/>
        <dbReference type="ChEBI" id="CHEBI:59789"/>
        <dbReference type="ChEBI" id="CHEBI:167612"/>
        <dbReference type="ChEBI" id="CHEBI:167614"/>
        <dbReference type="EC" id="2.1.1.296"/>
    </reaction>
</comment>
<comment type="subcellular location">
    <subcellularLocation>
        <location evidence="1">Nucleus</location>
    </subcellularLocation>
    <subcellularLocation>
        <location evidence="1">Cytoplasm</location>
    </subcellularLocation>
</comment>
<protein>
    <recommendedName>
        <fullName>Cap-specific mRNA (nucleoside-2'-O-)-methyltransferase 2</fullName>
        <ecNumber evidence="1">2.1.1.296</ecNumber>
    </recommendedName>
    <alternativeName>
        <fullName>Cap methyltransferase 2</fullName>
    </alternativeName>
    <alternativeName>
        <fullName>Cap2 2'O-ribose methyltransferase 2</fullName>
        <shortName>MTr2</shortName>
    </alternativeName>
    <alternativeName>
        <fullName>FtsJ methyltransferase domain-containing protein 1</fullName>
    </alternativeName>
</protein>
<name>CMTR2_MOUSE</name>
<sequence length="767" mass="87143">MSKRRKLPARQPACLETFSPDVLNDVSELFAKSFSYRKPLDNEWQLPAPTESFSCGHLEFRALLDLKNSLNEVKNLLSDKKLDEWHRHTAFTNKAGKIISHVKKAVNAELCTQAWCKFQEILCSFPLIPQEAFQSGRLNSLHLCEAPGAFIASLNHYLKSHRFPCEWSWVANSLNPYHEANDNLRMITDDRLMANTLHCWYFGPDNTGDIMTLKYLTGLQDFLSGMSPIHLVTADGSFDCQGNPGEQEALVSSLHYCEAVTALITLGDGGSFVLKMFTLFEHCSVNLMYLLNCSFDQVHVFKPATSKAGNSEVYVVCLRYKGREAVQPLLSRMVLNFGTEMTRKALFPHHVIPKSFLERHEECCTFFHRYQLETISENIRLFESMGTGEQERLNNLRDCAVQYFMQKFQLKPLSRNHWLVKKSNIGCSMNTKWFGQRNKYFKTYNERKMMETLSWKDKVAKGYFNSWAEEHTVYHPGQNSLLEGTASSLEYQSWQVLEGKKLPKVKCSPFCDGEILKTLNEAIEKSLGEALSVDAKVSSKQQYRCCPVFSEESVLSELLRLTKCLPDEQGAEPSGPVKCLLVGSPAVCDLQMPAPLEIQLVESVELTAFSCSLLHDGDPAYQHLFLDCLLHSLRRLHRGDVMVLPILSCFTRFMAGLTFVLHGCFRFITFSCPTSLEPLRTCAVLLCIGYQNLPDAVFQFLQNVHDLLSKLLHPSAPRQILQFLPMEALLQGTLLDFLWDLNAAIAKRHLHLIIQGERDQAIGSLEL</sequence>
<dbReference type="EC" id="2.1.1.296" evidence="1"/>
<dbReference type="EMBL" id="AK050315">
    <property type="protein sequence ID" value="BAC34184.1"/>
    <property type="molecule type" value="mRNA"/>
</dbReference>
<dbReference type="EMBL" id="AK158368">
    <property type="protein sequence ID" value="BAE34476.1"/>
    <property type="molecule type" value="mRNA"/>
</dbReference>
<dbReference type="EMBL" id="BC025546">
    <property type="protein sequence ID" value="AAH25546.1"/>
    <property type="molecule type" value="mRNA"/>
</dbReference>
<dbReference type="CCDS" id="CCDS22662.1"/>
<dbReference type="RefSeq" id="NP_666327.2">
    <property type="nucleotide sequence ID" value="NM_146215.4"/>
</dbReference>
<dbReference type="RefSeq" id="XP_006530979.1">
    <property type="nucleotide sequence ID" value="XM_006530916.4"/>
</dbReference>
<dbReference type="RefSeq" id="XP_006530980.1">
    <property type="nucleotide sequence ID" value="XM_006530917.4"/>
</dbReference>
<dbReference type="SMR" id="Q8BWQ4"/>
<dbReference type="FunCoup" id="Q8BWQ4">
    <property type="interactions" value="5200"/>
</dbReference>
<dbReference type="STRING" id="10090.ENSMUSP00000060558"/>
<dbReference type="iPTMnet" id="Q8BWQ4"/>
<dbReference type="PhosphoSitePlus" id="Q8BWQ4"/>
<dbReference type="jPOST" id="Q8BWQ4"/>
<dbReference type="PaxDb" id="10090-ENSMUSP00000060558"/>
<dbReference type="PeptideAtlas" id="Q8BWQ4"/>
<dbReference type="ProteomicsDB" id="285504"/>
<dbReference type="Pumba" id="Q8BWQ4"/>
<dbReference type="Antibodypedia" id="44554">
    <property type="antibodies" value="76 antibodies from 18 providers"/>
</dbReference>
<dbReference type="DNASU" id="234728"/>
<dbReference type="Ensembl" id="ENSMUST00000056972.6">
    <property type="protein sequence ID" value="ENSMUSP00000060558.5"/>
    <property type="gene ID" value="ENSMUSG00000046441.6"/>
</dbReference>
<dbReference type="GeneID" id="234728"/>
<dbReference type="KEGG" id="mmu:234728"/>
<dbReference type="UCSC" id="uc009nkp.2">
    <property type="organism name" value="mouse"/>
</dbReference>
<dbReference type="AGR" id="MGI:2384580"/>
<dbReference type="CTD" id="55783"/>
<dbReference type="MGI" id="MGI:2384580">
    <property type="gene designation" value="Cmtr2"/>
</dbReference>
<dbReference type="VEuPathDB" id="HostDB:ENSMUSG00000046441"/>
<dbReference type="eggNOG" id="KOG3674">
    <property type="taxonomic scope" value="Eukaryota"/>
</dbReference>
<dbReference type="GeneTree" id="ENSGT00940000161773"/>
<dbReference type="HOGENOM" id="CLU_019427_0_0_1"/>
<dbReference type="InParanoid" id="Q8BWQ4"/>
<dbReference type="OMA" id="WCIPDPN"/>
<dbReference type="OrthoDB" id="429597at2759"/>
<dbReference type="PhylomeDB" id="Q8BWQ4"/>
<dbReference type="TreeFam" id="TF314897"/>
<dbReference type="BioGRID-ORCS" id="234728">
    <property type="hits" value="21 hits in 79 CRISPR screens"/>
</dbReference>
<dbReference type="PRO" id="PR:Q8BWQ4"/>
<dbReference type="Proteomes" id="UP000000589">
    <property type="component" value="Chromosome 8"/>
</dbReference>
<dbReference type="RNAct" id="Q8BWQ4">
    <property type="molecule type" value="protein"/>
</dbReference>
<dbReference type="Bgee" id="ENSMUSG00000046441">
    <property type="expression patterns" value="Expressed in animal zygote and 221 other cell types or tissues"/>
</dbReference>
<dbReference type="ExpressionAtlas" id="Q8BWQ4">
    <property type="expression patterns" value="baseline and differential"/>
</dbReference>
<dbReference type="GO" id="GO:0005737">
    <property type="term" value="C:cytoplasm"/>
    <property type="evidence" value="ECO:0000250"/>
    <property type="project" value="UniProtKB"/>
</dbReference>
<dbReference type="GO" id="GO:0005634">
    <property type="term" value="C:nucleus"/>
    <property type="evidence" value="ECO:0000250"/>
    <property type="project" value="UniProtKB"/>
</dbReference>
<dbReference type="GO" id="GO:0004483">
    <property type="term" value="F:mRNA (nucleoside-2'-O-)-methyltransferase activity"/>
    <property type="evidence" value="ECO:0000250"/>
    <property type="project" value="UniProtKB"/>
</dbReference>
<dbReference type="GO" id="GO:0006370">
    <property type="term" value="P:7-methylguanosine mRNA capping"/>
    <property type="evidence" value="ECO:0000250"/>
    <property type="project" value="UniProtKB"/>
</dbReference>
<dbReference type="GO" id="GO:0032259">
    <property type="term" value="P:methylation"/>
    <property type="evidence" value="ECO:0007669"/>
    <property type="project" value="UniProtKB-KW"/>
</dbReference>
<dbReference type="FunFam" id="3.40.50.12760:FF:000002">
    <property type="entry name" value="Cap methyltransferase 2"/>
    <property type="match status" value="1"/>
</dbReference>
<dbReference type="FunFam" id="3.40.50.12760:FF:000003">
    <property type="entry name" value="Cap methyltransferase 2"/>
    <property type="match status" value="1"/>
</dbReference>
<dbReference type="Gene3D" id="3.40.50.12760">
    <property type="match status" value="2"/>
</dbReference>
<dbReference type="InterPro" id="IPR025807">
    <property type="entry name" value="Adrift-typ_MeTrfase"/>
</dbReference>
<dbReference type="InterPro" id="IPR050851">
    <property type="entry name" value="mRNA_Cap_2O-Ribose_MeTrfase"/>
</dbReference>
<dbReference type="InterPro" id="IPR002877">
    <property type="entry name" value="RNA_MeTrfase_FtsJ_dom"/>
</dbReference>
<dbReference type="InterPro" id="IPR029063">
    <property type="entry name" value="SAM-dependent_MTases_sf"/>
</dbReference>
<dbReference type="PANTHER" id="PTHR16121">
    <property type="entry name" value="CAP-SPECIFIC MRNA (NUCLEOSIDE-2'-O-)-METHYLTRANSFERASE 1-RELATED"/>
    <property type="match status" value="1"/>
</dbReference>
<dbReference type="PANTHER" id="PTHR16121:SF2">
    <property type="entry name" value="CAP-SPECIFIC MRNA (NUCLEOSIDE-2'-O-)-METHYLTRANSFERASE 2"/>
    <property type="match status" value="1"/>
</dbReference>
<dbReference type="Pfam" id="PF01728">
    <property type="entry name" value="FtsJ"/>
    <property type="match status" value="1"/>
</dbReference>
<dbReference type="SUPFAM" id="SSF53335">
    <property type="entry name" value="S-adenosyl-L-methionine-dependent methyltransferases"/>
    <property type="match status" value="1"/>
</dbReference>
<dbReference type="PROSITE" id="PS51614">
    <property type="entry name" value="SAM_MT_ADRIFT"/>
    <property type="match status" value="1"/>
</dbReference>
<evidence type="ECO:0000250" key="1">
    <source>
        <dbReference type="UniProtKB" id="Q8IYT2"/>
    </source>
</evidence>
<evidence type="ECO:0000255" key="2">
    <source>
        <dbReference type="PROSITE-ProRule" id="PRU00946"/>
    </source>
</evidence>
<evidence type="ECO:0000305" key="3"/>
<gene>
    <name type="primary">Cmtr2</name>
    <name type="synonym">Ftsjd1</name>
</gene>
<organism>
    <name type="scientific">Mus musculus</name>
    <name type="common">Mouse</name>
    <dbReference type="NCBI Taxonomy" id="10090"/>
    <lineage>
        <taxon>Eukaryota</taxon>
        <taxon>Metazoa</taxon>
        <taxon>Chordata</taxon>
        <taxon>Craniata</taxon>
        <taxon>Vertebrata</taxon>
        <taxon>Euteleostomi</taxon>
        <taxon>Mammalia</taxon>
        <taxon>Eutheria</taxon>
        <taxon>Euarchontoglires</taxon>
        <taxon>Glires</taxon>
        <taxon>Rodentia</taxon>
        <taxon>Myomorpha</taxon>
        <taxon>Muroidea</taxon>
        <taxon>Muridae</taxon>
        <taxon>Murinae</taxon>
        <taxon>Mus</taxon>
        <taxon>Mus</taxon>
    </lineage>
</organism>
<reference key="1">
    <citation type="journal article" date="2005" name="Science">
        <title>The transcriptional landscape of the mammalian genome.</title>
        <authorList>
            <person name="Carninci P."/>
            <person name="Kasukawa T."/>
            <person name="Katayama S."/>
            <person name="Gough J."/>
            <person name="Frith M.C."/>
            <person name="Maeda N."/>
            <person name="Oyama R."/>
            <person name="Ravasi T."/>
            <person name="Lenhard B."/>
            <person name="Wells C."/>
            <person name="Kodzius R."/>
            <person name="Shimokawa K."/>
            <person name="Bajic V.B."/>
            <person name="Brenner S.E."/>
            <person name="Batalov S."/>
            <person name="Forrest A.R."/>
            <person name="Zavolan M."/>
            <person name="Davis M.J."/>
            <person name="Wilming L.G."/>
            <person name="Aidinis V."/>
            <person name="Allen J.E."/>
            <person name="Ambesi-Impiombato A."/>
            <person name="Apweiler R."/>
            <person name="Aturaliya R.N."/>
            <person name="Bailey T.L."/>
            <person name="Bansal M."/>
            <person name="Baxter L."/>
            <person name="Beisel K.W."/>
            <person name="Bersano T."/>
            <person name="Bono H."/>
            <person name="Chalk A.M."/>
            <person name="Chiu K.P."/>
            <person name="Choudhary V."/>
            <person name="Christoffels A."/>
            <person name="Clutterbuck D.R."/>
            <person name="Crowe M.L."/>
            <person name="Dalla E."/>
            <person name="Dalrymple B.P."/>
            <person name="de Bono B."/>
            <person name="Della Gatta G."/>
            <person name="di Bernardo D."/>
            <person name="Down T."/>
            <person name="Engstrom P."/>
            <person name="Fagiolini M."/>
            <person name="Faulkner G."/>
            <person name="Fletcher C.F."/>
            <person name="Fukushima T."/>
            <person name="Furuno M."/>
            <person name="Futaki S."/>
            <person name="Gariboldi M."/>
            <person name="Georgii-Hemming P."/>
            <person name="Gingeras T.R."/>
            <person name="Gojobori T."/>
            <person name="Green R.E."/>
            <person name="Gustincich S."/>
            <person name="Harbers M."/>
            <person name="Hayashi Y."/>
            <person name="Hensch T.K."/>
            <person name="Hirokawa N."/>
            <person name="Hill D."/>
            <person name="Huminiecki L."/>
            <person name="Iacono M."/>
            <person name="Ikeo K."/>
            <person name="Iwama A."/>
            <person name="Ishikawa T."/>
            <person name="Jakt M."/>
            <person name="Kanapin A."/>
            <person name="Katoh M."/>
            <person name="Kawasawa Y."/>
            <person name="Kelso J."/>
            <person name="Kitamura H."/>
            <person name="Kitano H."/>
            <person name="Kollias G."/>
            <person name="Krishnan S.P."/>
            <person name="Kruger A."/>
            <person name="Kummerfeld S.K."/>
            <person name="Kurochkin I.V."/>
            <person name="Lareau L.F."/>
            <person name="Lazarevic D."/>
            <person name="Lipovich L."/>
            <person name="Liu J."/>
            <person name="Liuni S."/>
            <person name="McWilliam S."/>
            <person name="Madan Babu M."/>
            <person name="Madera M."/>
            <person name="Marchionni L."/>
            <person name="Matsuda H."/>
            <person name="Matsuzawa S."/>
            <person name="Miki H."/>
            <person name="Mignone F."/>
            <person name="Miyake S."/>
            <person name="Morris K."/>
            <person name="Mottagui-Tabar S."/>
            <person name="Mulder N."/>
            <person name="Nakano N."/>
            <person name="Nakauchi H."/>
            <person name="Ng P."/>
            <person name="Nilsson R."/>
            <person name="Nishiguchi S."/>
            <person name="Nishikawa S."/>
            <person name="Nori F."/>
            <person name="Ohara O."/>
            <person name="Okazaki Y."/>
            <person name="Orlando V."/>
            <person name="Pang K.C."/>
            <person name="Pavan W.J."/>
            <person name="Pavesi G."/>
            <person name="Pesole G."/>
            <person name="Petrovsky N."/>
            <person name="Piazza S."/>
            <person name="Reed J."/>
            <person name="Reid J.F."/>
            <person name="Ring B.Z."/>
            <person name="Ringwald M."/>
            <person name="Rost B."/>
            <person name="Ruan Y."/>
            <person name="Salzberg S.L."/>
            <person name="Sandelin A."/>
            <person name="Schneider C."/>
            <person name="Schoenbach C."/>
            <person name="Sekiguchi K."/>
            <person name="Semple C.A."/>
            <person name="Seno S."/>
            <person name="Sessa L."/>
            <person name="Sheng Y."/>
            <person name="Shibata Y."/>
            <person name="Shimada H."/>
            <person name="Shimada K."/>
            <person name="Silva D."/>
            <person name="Sinclair B."/>
            <person name="Sperling S."/>
            <person name="Stupka E."/>
            <person name="Sugiura K."/>
            <person name="Sultana R."/>
            <person name="Takenaka Y."/>
            <person name="Taki K."/>
            <person name="Tammoja K."/>
            <person name="Tan S.L."/>
            <person name="Tang S."/>
            <person name="Taylor M.S."/>
            <person name="Tegner J."/>
            <person name="Teichmann S.A."/>
            <person name="Ueda H.R."/>
            <person name="van Nimwegen E."/>
            <person name="Verardo R."/>
            <person name="Wei C.L."/>
            <person name="Yagi K."/>
            <person name="Yamanishi H."/>
            <person name="Zabarovsky E."/>
            <person name="Zhu S."/>
            <person name="Zimmer A."/>
            <person name="Hide W."/>
            <person name="Bult C."/>
            <person name="Grimmond S.M."/>
            <person name="Teasdale R.D."/>
            <person name="Liu E.T."/>
            <person name="Brusic V."/>
            <person name="Quackenbush J."/>
            <person name="Wahlestedt C."/>
            <person name="Mattick J.S."/>
            <person name="Hume D.A."/>
            <person name="Kai C."/>
            <person name="Sasaki D."/>
            <person name="Tomaru Y."/>
            <person name="Fukuda S."/>
            <person name="Kanamori-Katayama M."/>
            <person name="Suzuki M."/>
            <person name="Aoki J."/>
            <person name="Arakawa T."/>
            <person name="Iida J."/>
            <person name="Imamura K."/>
            <person name="Itoh M."/>
            <person name="Kato T."/>
            <person name="Kawaji H."/>
            <person name="Kawagashira N."/>
            <person name="Kawashima T."/>
            <person name="Kojima M."/>
            <person name="Kondo S."/>
            <person name="Konno H."/>
            <person name="Nakano K."/>
            <person name="Ninomiya N."/>
            <person name="Nishio T."/>
            <person name="Okada M."/>
            <person name="Plessy C."/>
            <person name="Shibata K."/>
            <person name="Shiraki T."/>
            <person name="Suzuki S."/>
            <person name="Tagami M."/>
            <person name="Waki K."/>
            <person name="Watahiki A."/>
            <person name="Okamura-Oho Y."/>
            <person name="Suzuki H."/>
            <person name="Kawai J."/>
            <person name="Hayashizaki Y."/>
        </authorList>
    </citation>
    <scope>NUCLEOTIDE SEQUENCE [LARGE SCALE MRNA]</scope>
    <source>
        <strain>C57BL/6J</strain>
        <tissue>Inner ear</tissue>
        <tissue>Liver</tissue>
    </source>
</reference>
<reference key="2">
    <citation type="journal article" date="2004" name="Genome Res.">
        <title>The status, quality, and expansion of the NIH full-length cDNA project: the Mammalian Gene Collection (MGC).</title>
        <authorList>
            <consortium name="The MGC Project Team"/>
        </authorList>
    </citation>
    <scope>NUCLEOTIDE SEQUENCE [LARGE SCALE MRNA]</scope>
    <source>
        <strain>FVB/N</strain>
        <tissue>Mammary tumor</tissue>
    </source>
</reference>
<feature type="chain" id="PRO_0000326181" description="Cap-specific mRNA (nucleoside-2'-O-)-methyltransferase 2">
    <location>
        <begin position="1"/>
        <end position="767"/>
    </location>
</feature>
<feature type="domain" description="Adrift-type SAM-dependent 2'-O-MTase" evidence="2">
    <location>
        <begin position="109"/>
        <end position="322"/>
    </location>
</feature>
<feature type="active site" evidence="1">
    <location>
        <position position="117"/>
    </location>
</feature>
<feature type="active site" evidence="1">
    <location>
        <position position="235"/>
    </location>
</feature>
<feature type="active site" description="Proton acceptor" evidence="2">
    <location>
        <position position="275"/>
    </location>
</feature>
<feature type="binding site" evidence="2">
    <location>
        <position position="148"/>
    </location>
    <ligand>
        <name>S-adenosyl-L-methionine</name>
        <dbReference type="ChEBI" id="CHEBI:59789"/>
    </ligand>
</feature>
<feature type="binding site" evidence="2">
    <location>
        <position position="167"/>
    </location>
    <ligand>
        <name>S-adenosyl-L-methionine</name>
        <dbReference type="ChEBI" id="CHEBI:59789"/>
    </ligand>
</feature>
<feature type="binding site" evidence="2">
    <location>
        <position position="235"/>
    </location>
    <ligand>
        <name>S-adenosyl-L-methionine</name>
        <dbReference type="ChEBI" id="CHEBI:59789"/>
    </ligand>
</feature>
<feature type="sequence conflict" description="In Ref. 2; AAH25546." evidence="3" ref="2">
    <original>A</original>
    <variation>T</variation>
    <location>
        <position position="108"/>
    </location>
</feature>
<keyword id="KW-0963">Cytoplasm</keyword>
<keyword id="KW-0489">Methyltransferase</keyword>
<keyword id="KW-0506">mRNA capping</keyword>
<keyword id="KW-0507">mRNA processing</keyword>
<keyword id="KW-0539">Nucleus</keyword>
<keyword id="KW-1185">Reference proteome</keyword>
<keyword id="KW-0949">S-adenosyl-L-methionine</keyword>
<keyword id="KW-0808">Transferase</keyword>
<proteinExistence type="evidence at transcript level"/>